<proteinExistence type="inferred from homology"/>
<dbReference type="EC" id="2.5.1.141" evidence="1"/>
<dbReference type="EMBL" id="AM889285">
    <property type="protein sequence ID" value="CAP56043.1"/>
    <property type="molecule type" value="Genomic_DNA"/>
</dbReference>
<dbReference type="EMBL" id="CP001189">
    <property type="protein sequence ID" value="ACI50115.1"/>
    <property type="molecule type" value="Genomic_DNA"/>
</dbReference>
<dbReference type="RefSeq" id="WP_012225851.1">
    <property type="nucleotide sequence ID" value="NC_010125.1"/>
</dbReference>
<dbReference type="SMR" id="A9HKH7"/>
<dbReference type="STRING" id="272568.GDI2100"/>
<dbReference type="KEGG" id="gdi:GDI2100"/>
<dbReference type="KEGG" id="gdj:Gdia_0319"/>
<dbReference type="eggNOG" id="COG0109">
    <property type="taxonomic scope" value="Bacteria"/>
</dbReference>
<dbReference type="HOGENOM" id="CLU_029631_0_2_5"/>
<dbReference type="OrthoDB" id="9814417at2"/>
<dbReference type="UniPathway" id="UPA00834">
    <property type="reaction ID" value="UER00712"/>
</dbReference>
<dbReference type="Proteomes" id="UP000001176">
    <property type="component" value="Chromosome"/>
</dbReference>
<dbReference type="GO" id="GO:0005886">
    <property type="term" value="C:plasma membrane"/>
    <property type="evidence" value="ECO:0007669"/>
    <property type="project" value="UniProtKB-SubCell"/>
</dbReference>
<dbReference type="GO" id="GO:0008495">
    <property type="term" value="F:protoheme IX farnesyltransferase activity"/>
    <property type="evidence" value="ECO:0007669"/>
    <property type="project" value="UniProtKB-UniRule"/>
</dbReference>
<dbReference type="GO" id="GO:0048034">
    <property type="term" value="P:heme O biosynthetic process"/>
    <property type="evidence" value="ECO:0007669"/>
    <property type="project" value="UniProtKB-UniRule"/>
</dbReference>
<dbReference type="CDD" id="cd13957">
    <property type="entry name" value="PT_UbiA_Cox10"/>
    <property type="match status" value="1"/>
</dbReference>
<dbReference type="Gene3D" id="1.10.357.140">
    <property type="entry name" value="UbiA prenyltransferase"/>
    <property type="match status" value="1"/>
</dbReference>
<dbReference type="HAMAP" id="MF_00154">
    <property type="entry name" value="CyoE_CtaB"/>
    <property type="match status" value="1"/>
</dbReference>
<dbReference type="InterPro" id="IPR006369">
    <property type="entry name" value="Protohaem_IX_farnesylTrfase"/>
</dbReference>
<dbReference type="InterPro" id="IPR000537">
    <property type="entry name" value="UbiA_prenyltransferase"/>
</dbReference>
<dbReference type="InterPro" id="IPR030470">
    <property type="entry name" value="UbiA_prenylTrfase_CS"/>
</dbReference>
<dbReference type="InterPro" id="IPR044878">
    <property type="entry name" value="UbiA_sf"/>
</dbReference>
<dbReference type="NCBIfam" id="TIGR01473">
    <property type="entry name" value="cyoE_ctaB"/>
    <property type="match status" value="1"/>
</dbReference>
<dbReference type="NCBIfam" id="NF003349">
    <property type="entry name" value="PRK04375.1-2"/>
    <property type="match status" value="1"/>
</dbReference>
<dbReference type="PANTHER" id="PTHR43448:SF7">
    <property type="entry name" value="4-HYDROXYBENZOATE SOLANESYLTRANSFERASE"/>
    <property type="match status" value="1"/>
</dbReference>
<dbReference type="PANTHER" id="PTHR43448">
    <property type="entry name" value="PROTOHEME IX FARNESYLTRANSFERASE, MITOCHONDRIAL"/>
    <property type="match status" value="1"/>
</dbReference>
<dbReference type="Pfam" id="PF01040">
    <property type="entry name" value="UbiA"/>
    <property type="match status" value="1"/>
</dbReference>
<dbReference type="PROSITE" id="PS00943">
    <property type="entry name" value="UBIA"/>
    <property type="match status" value="1"/>
</dbReference>
<reference key="1">
    <citation type="journal article" date="2009" name="BMC Genomics">
        <title>Complete genome sequence of the sugarcane nitrogen-fixing endophyte Gluconacetobacter diazotrophicus Pal5.</title>
        <authorList>
            <person name="Bertalan M."/>
            <person name="Albano R."/>
            <person name="de Padua V."/>
            <person name="Rouws L."/>
            <person name="Rojas C."/>
            <person name="Hemerly A."/>
            <person name="Teixeira K."/>
            <person name="Schwab S."/>
            <person name="Araujo J."/>
            <person name="Oliveira A."/>
            <person name="Franca L."/>
            <person name="Magalhaes V."/>
            <person name="Alqueres S."/>
            <person name="Cardoso A."/>
            <person name="Almeida W."/>
            <person name="Loureiro M.M."/>
            <person name="Nogueira E."/>
            <person name="Cidade D."/>
            <person name="Oliveira D."/>
            <person name="Simao T."/>
            <person name="Macedo J."/>
            <person name="Valadao A."/>
            <person name="Dreschsel M."/>
            <person name="Freitas F."/>
            <person name="Vidal M."/>
            <person name="Guedes H."/>
            <person name="Rodrigues E."/>
            <person name="Meneses C."/>
            <person name="Brioso P."/>
            <person name="Pozzer L."/>
            <person name="Figueiredo D."/>
            <person name="Montano H."/>
            <person name="Junior J."/>
            <person name="de Souza Filho G."/>
            <person name="Martin Quintana Flores V."/>
            <person name="Ferreira B."/>
            <person name="Branco A."/>
            <person name="Gonzalez P."/>
            <person name="Guillobel H."/>
            <person name="Lemos M."/>
            <person name="Seibel L."/>
            <person name="Macedo J."/>
            <person name="Alves-Ferreira M."/>
            <person name="Sachetto-Martins G."/>
            <person name="Coelho A."/>
            <person name="Santos E."/>
            <person name="Amaral G."/>
            <person name="Neves A."/>
            <person name="Pacheco A.B."/>
            <person name="Carvalho D."/>
            <person name="Lery L."/>
            <person name="Bisch P."/>
            <person name="Rossle S.C."/>
            <person name="Urmenyi T."/>
            <person name="Rael Pereira A."/>
            <person name="Silva R."/>
            <person name="Rondinelli E."/>
            <person name="von Kruger W."/>
            <person name="Martins O."/>
            <person name="Baldani J.I."/>
            <person name="Ferreira P.C."/>
        </authorList>
    </citation>
    <scope>NUCLEOTIDE SEQUENCE [LARGE SCALE GENOMIC DNA]</scope>
    <source>
        <strain>ATCC 49037 / DSM 5601 / CCUG 37298 / CIP 103539 / LMG 7603 / PAl5</strain>
    </source>
</reference>
<reference key="2">
    <citation type="journal article" date="2010" name="Stand. Genomic Sci.">
        <title>Two genome sequences of the same bacterial strain, Gluconacetobacter diazotrophicus PAl 5, suggest a new standard in genome sequence submission.</title>
        <authorList>
            <person name="Giongo A."/>
            <person name="Tyler H.L."/>
            <person name="Zipperer U.N."/>
            <person name="Triplett E.W."/>
        </authorList>
    </citation>
    <scope>NUCLEOTIDE SEQUENCE [LARGE SCALE GENOMIC DNA]</scope>
    <source>
        <strain>ATCC 49037 / DSM 5601 / CCUG 37298 / CIP 103539 / LMG 7603 / PAl5</strain>
    </source>
</reference>
<accession>A9HKH7</accession>
<accession>B5ZLI6</accession>
<evidence type="ECO:0000255" key="1">
    <source>
        <dbReference type="HAMAP-Rule" id="MF_00154"/>
    </source>
</evidence>
<name>COXX_GLUDA</name>
<keyword id="KW-0997">Cell inner membrane</keyword>
<keyword id="KW-1003">Cell membrane</keyword>
<keyword id="KW-0350">Heme biosynthesis</keyword>
<keyword id="KW-0472">Membrane</keyword>
<keyword id="KW-1185">Reference proteome</keyword>
<keyword id="KW-0808">Transferase</keyword>
<keyword id="KW-0812">Transmembrane</keyword>
<keyword id="KW-1133">Transmembrane helix</keyword>
<feature type="chain" id="PRO_0000346050" description="Protoheme IX farnesyltransferase">
    <location>
        <begin position="1"/>
        <end position="315"/>
    </location>
</feature>
<feature type="transmembrane region" description="Helical" evidence="1">
    <location>
        <begin position="34"/>
        <end position="54"/>
    </location>
</feature>
<feature type="transmembrane region" description="Helical" evidence="1">
    <location>
        <begin position="55"/>
        <end position="75"/>
    </location>
</feature>
<feature type="transmembrane region" description="Helical" evidence="1">
    <location>
        <begin position="105"/>
        <end position="125"/>
    </location>
</feature>
<feature type="transmembrane region" description="Helical" evidence="1">
    <location>
        <begin position="127"/>
        <end position="147"/>
    </location>
</feature>
<feature type="transmembrane region" description="Helical" evidence="1">
    <location>
        <begin position="155"/>
        <end position="175"/>
    </location>
</feature>
<feature type="transmembrane region" description="Helical" evidence="1">
    <location>
        <begin position="177"/>
        <end position="197"/>
    </location>
</feature>
<feature type="transmembrane region" description="Helical" evidence="1">
    <location>
        <begin position="226"/>
        <end position="246"/>
    </location>
</feature>
<feature type="transmembrane region" description="Helical" evidence="1">
    <location>
        <begin position="251"/>
        <end position="271"/>
    </location>
</feature>
<feature type="transmembrane region" description="Helical" evidence="1">
    <location>
        <begin position="294"/>
        <end position="314"/>
    </location>
</feature>
<comment type="function">
    <text evidence="1">Converts heme B (protoheme IX) to heme O by substitution of the vinyl group on carbon 2 of heme B porphyrin ring with a hydroxyethyl farnesyl side group.</text>
</comment>
<comment type="catalytic activity">
    <reaction evidence="1">
        <text>heme b + (2E,6E)-farnesyl diphosphate + H2O = Fe(II)-heme o + diphosphate</text>
        <dbReference type="Rhea" id="RHEA:28070"/>
        <dbReference type="ChEBI" id="CHEBI:15377"/>
        <dbReference type="ChEBI" id="CHEBI:33019"/>
        <dbReference type="ChEBI" id="CHEBI:60344"/>
        <dbReference type="ChEBI" id="CHEBI:60530"/>
        <dbReference type="ChEBI" id="CHEBI:175763"/>
        <dbReference type="EC" id="2.5.1.141"/>
    </reaction>
</comment>
<comment type="pathway">
    <text evidence="1">Porphyrin-containing compound metabolism; heme O biosynthesis; heme O from protoheme: step 1/1.</text>
</comment>
<comment type="subcellular location">
    <subcellularLocation>
        <location evidence="1">Cell inner membrane</location>
        <topology evidence="1">Multi-pass membrane protein</topology>
    </subcellularLocation>
</comment>
<comment type="miscellaneous">
    <text evidence="1">Carbon 2 of the heme B porphyrin ring is defined according to the Fischer nomenclature.</text>
</comment>
<comment type="similarity">
    <text evidence="1">Belongs to the UbiA prenyltransferase family. Protoheme IX farnesyltransferase subfamily.</text>
</comment>
<organism>
    <name type="scientific">Gluconacetobacter diazotrophicus (strain ATCC 49037 / DSM 5601 / CCUG 37298 / CIP 103539 / LMG 7603 / PAl5)</name>
    <dbReference type="NCBI Taxonomy" id="272568"/>
    <lineage>
        <taxon>Bacteria</taxon>
        <taxon>Pseudomonadati</taxon>
        <taxon>Pseudomonadota</taxon>
        <taxon>Alphaproteobacteria</taxon>
        <taxon>Acetobacterales</taxon>
        <taxon>Acetobacteraceae</taxon>
        <taxon>Gluconacetobacter</taxon>
    </lineage>
</organism>
<gene>
    <name evidence="1" type="primary">ctaB</name>
    <name type="ordered locus">GDI2100</name>
    <name type="ordered locus">Gdia_0319</name>
</gene>
<sequence length="315" mass="33888">MSGAATTEGAVTRFDAALVGTEARDWFALLKPRVISLVVFTGAAGLAMAPGPINPLIAAVSILCICMASGAAGAINMWYDRDIDAVMTRTARRPIPDGRIRDDQALGFGIGLSVASVLLMWLAANALAAFILAFSIFFYAVIYTMWLKRSTPQNIVIGGAAGAFPPMIGWAATTGSLGVLPVVMFAIVFLWTPPHFWSLSLYACKDYGRAGIPMLPVVRGARHTRWQILFYTLILSAVSLVPSFLHQAGWLYTGVASLLDAGFVACAVGVLTDRQDEAGVSLTGDRPARRAFRYSLAYLFLLFCGLLADHFLIMR</sequence>
<protein>
    <recommendedName>
        <fullName evidence="1">Protoheme IX farnesyltransferase</fullName>
        <ecNumber evidence="1">2.5.1.141</ecNumber>
    </recommendedName>
    <alternativeName>
        <fullName evidence="1">Heme B farnesyltransferase</fullName>
    </alternativeName>
    <alternativeName>
        <fullName evidence="1">Heme O synthase</fullName>
    </alternativeName>
</protein>